<proteinExistence type="evidence at protein level"/>
<keyword id="KW-0964">Secreted</keyword>
<gene>
    <name evidence="4" type="primary">selX</name>
    <name type="ordered locus">NWMN_0362</name>
</gene>
<comment type="function">
    <text evidence="3">Plays a role in the inhibition of the host innate immune system. Inhibits phagocytosis and killing by human neutrophils by interacting with multiple neutrophil surface glycoproteins in a sialic acid-dependent manner.</text>
</comment>
<comment type="subcellular location">
    <subcellularLocation>
        <location evidence="2">Secreted</location>
    </subcellularLocation>
</comment>
<comment type="induction">
    <text evidence="1">Under the control of the Staphylococcus aureus exotoxin expression (Sae) two component gene regulatory system.</text>
</comment>
<comment type="domain">
    <text evidence="3">The C-terminal domain contains a V-shape binding site for sialyl Lewis X.</text>
</comment>
<comment type="similarity">
    <text evidence="5">Belongs to the staphylococcal/streptococcal toxin family.</text>
</comment>
<accession>A0A0H3K6X4</accession>
<reference key="1">
    <citation type="journal article" date="2008" name="J. Bacteriol.">
        <title>Genome sequence of Staphylococcus aureus strain Newman and comparative analysis of staphylococcal genomes: polymorphism and evolution of two major pathogenicity islands.</title>
        <authorList>
            <person name="Baba T."/>
            <person name="Bae T."/>
            <person name="Schneewind O."/>
            <person name="Takeuchi F."/>
            <person name="Hiramatsu K."/>
        </authorList>
    </citation>
    <scope>NUCLEOTIDE SEQUENCE [LARGE SCALE GENOMIC DNA]</scope>
    <source>
        <strain>Newman</strain>
    </source>
</reference>
<reference key="2">
    <citation type="journal article" date="2017" name="PLoS Pathog.">
        <title>The Staphylococcus aureus superantigen SElX is a bifunctional toxin that inhibits neutrophil function.</title>
        <authorList>
            <person name="Tuffs S.W."/>
            <person name="James D.B.A."/>
            <person name="Bestebroer J."/>
            <person name="Richards A.C."/>
            <person name="Goncheva M.I."/>
            <person name="O'Shea M."/>
            <person name="Wee B.A."/>
            <person name="Seo K.S."/>
            <person name="Schlievert P.M."/>
            <person name="Lengeling A."/>
            <person name="van Strijp J.A."/>
            <person name="Torres V.J."/>
            <person name="Fitzgerald J.R."/>
        </authorList>
    </citation>
    <scope>FUNCTION</scope>
    <scope>DOMAIN</scope>
    <scope>MUTAGENESIS OF GLU-167; LYS-170 AND GLN-173</scope>
</reference>
<feature type="chain" id="PRO_0000447512" description="Enterotoxin-like toxin X">
    <location>
        <begin position="1"/>
        <end position="203"/>
    </location>
</feature>
<feature type="region of interest" description="Sialic acid-binding motif" evidence="6">
    <location>
        <begin position="164"/>
        <end position="180"/>
    </location>
</feature>
<feature type="mutagenesis site" description="Loss of interaction with neutrophils." evidence="3">
    <original>E</original>
    <variation>A</variation>
    <location>
        <position position="167"/>
    </location>
</feature>
<feature type="mutagenesis site" description="Loss of interaction with neutrophils." evidence="3">
    <original>K</original>
    <variation>A</variation>
    <location>
        <position position="170"/>
    </location>
</feature>
<feature type="mutagenesis site" description="Loss of interaction with neutrophils." evidence="3">
    <original>Q</original>
    <variation>A</variation>
    <location>
        <position position="173"/>
    </location>
</feature>
<protein>
    <recommendedName>
        <fullName evidence="4">Enterotoxin-like toxin X</fullName>
    </recommendedName>
</protein>
<organism>
    <name type="scientific">Staphylococcus aureus (strain Newman)</name>
    <dbReference type="NCBI Taxonomy" id="426430"/>
    <lineage>
        <taxon>Bacteria</taxon>
        <taxon>Bacillati</taxon>
        <taxon>Bacillota</taxon>
        <taxon>Bacilli</taxon>
        <taxon>Bacillales</taxon>
        <taxon>Staphylococcaceae</taxon>
        <taxon>Staphylococcus</taxon>
    </lineage>
</organism>
<sequence length="203" mass="23165">MFKKYDSKNSIVLKSILSLGIIYGGTFGIYPKADASTQNSSSVQDKQLQKVEEVPNNSEKALVKKLYDRYSKDTINGKSNKSRNWVYSERPLNENQVRIHLEGTYTVAGRVYTPKRNITLNKEVVTLKELDHIIRFAHISYGLYMGEHLPKGNIVINTKDGGKYTLESHKELQKDRENVKINTADIKNVTFKLVKSVNDIEQV</sequence>
<dbReference type="EMBL" id="AP009351">
    <property type="protein sequence ID" value="BAF66634.1"/>
    <property type="molecule type" value="Genomic_DNA"/>
</dbReference>
<dbReference type="RefSeq" id="WP_000475326.1">
    <property type="nucleotide sequence ID" value="NZ_JBBIAE010000011.1"/>
</dbReference>
<dbReference type="SMR" id="A0A0H3K6X4"/>
<dbReference type="KEGG" id="sae:NWMN_0362"/>
<dbReference type="HOGENOM" id="CLU_127691_0_0_9"/>
<dbReference type="Proteomes" id="UP000006386">
    <property type="component" value="Chromosome"/>
</dbReference>
<dbReference type="GO" id="GO:0005576">
    <property type="term" value="C:extracellular region"/>
    <property type="evidence" value="ECO:0007669"/>
    <property type="project" value="UniProtKB-SubCell"/>
</dbReference>
<dbReference type="FunFam" id="3.10.20.120:FF:000002">
    <property type="entry name" value="Enterotoxin-like toxin X"/>
    <property type="match status" value="1"/>
</dbReference>
<dbReference type="Gene3D" id="3.10.20.120">
    <property type="match status" value="1"/>
</dbReference>
<dbReference type="InterPro" id="IPR016091">
    <property type="entry name" value="SuperAg_toxin_C"/>
</dbReference>
<dbReference type="InterPro" id="IPR006123">
    <property type="entry name" value="Toxin_b-grasp_Staph/Strep"/>
</dbReference>
<dbReference type="Pfam" id="PF02876">
    <property type="entry name" value="Stap_Strp_tox_C"/>
    <property type="match status" value="1"/>
</dbReference>
<dbReference type="SUPFAM" id="SSF54334">
    <property type="entry name" value="Superantigen toxins, C-terminal domain"/>
    <property type="match status" value="1"/>
</dbReference>
<evidence type="ECO:0000250" key="1">
    <source>
        <dbReference type="UniProtKB" id="G0Z026"/>
    </source>
</evidence>
<evidence type="ECO:0000250" key="2">
    <source>
        <dbReference type="UniProtKB" id="Q2G0X7"/>
    </source>
</evidence>
<evidence type="ECO:0000269" key="3">
    <source>
    </source>
</evidence>
<evidence type="ECO:0000303" key="4">
    <source>
    </source>
</evidence>
<evidence type="ECO:0000305" key="5"/>
<evidence type="ECO:0000305" key="6">
    <source>
    </source>
</evidence>
<name>SELX_STAAE</name>